<proteinExistence type="inferred from homology"/>
<name>NHAB_PSEE4</name>
<evidence type="ECO:0000255" key="1">
    <source>
        <dbReference type="HAMAP-Rule" id="MF_01599"/>
    </source>
</evidence>
<feature type="chain" id="PRO_0000333109" description="Na(+)/H(+) antiporter NhaB">
    <location>
        <begin position="1"/>
        <end position="500"/>
    </location>
</feature>
<feature type="transmembrane region" description="Helical" evidence="1">
    <location>
        <begin position="34"/>
        <end position="54"/>
    </location>
</feature>
<feature type="transmembrane region" description="Helical" evidence="1">
    <location>
        <begin position="58"/>
        <end position="78"/>
    </location>
</feature>
<feature type="transmembrane region" description="Helical" evidence="1">
    <location>
        <begin position="96"/>
        <end position="116"/>
    </location>
</feature>
<feature type="transmembrane region" description="Helical" evidence="1">
    <location>
        <begin position="129"/>
        <end position="149"/>
    </location>
</feature>
<feature type="transmembrane region" description="Helical" evidence="1">
    <location>
        <begin position="150"/>
        <end position="170"/>
    </location>
</feature>
<feature type="transmembrane region" description="Helical" evidence="1">
    <location>
        <begin position="205"/>
        <end position="225"/>
    </location>
</feature>
<feature type="transmembrane region" description="Helical" evidence="1">
    <location>
        <begin position="241"/>
        <end position="261"/>
    </location>
</feature>
<feature type="transmembrane region" description="Helical" evidence="1">
    <location>
        <begin position="311"/>
        <end position="331"/>
    </location>
</feature>
<feature type="transmembrane region" description="Helical" evidence="1">
    <location>
        <begin position="350"/>
        <end position="370"/>
    </location>
</feature>
<feature type="transmembrane region" description="Helical" evidence="1">
    <location>
        <begin position="394"/>
        <end position="414"/>
    </location>
</feature>
<feature type="transmembrane region" description="Helical" evidence="1">
    <location>
        <begin position="450"/>
        <end position="470"/>
    </location>
</feature>
<feature type="transmembrane region" description="Helical" evidence="1">
    <location>
        <begin position="477"/>
        <end position="497"/>
    </location>
</feature>
<accession>Q1IBG0</accession>
<organism>
    <name type="scientific">Pseudomonas entomophila (strain L48)</name>
    <dbReference type="NCBI Taxonomy" id="384676"/>
    <lineage>
        <taxon>Bacteria</taxon>
        <taxon>Pseudomonadati</taxon>
        <taxon>Pseudomonadota</taxon>
        <taxon>Gammaproteobacteria</taxon>
        <taxon>Pseudomonadales</taxon>
        <taxon>Pseudomonadaceae</taxon>
        <taxon>Pseudomonas</taxon>
    </lineage>
</organism>
<sequence>MSRSLTGALAHSFLGQSPRWYKAVIALFLVLNPLLLATLGPVVTGWVLVIQFIFTLGMALKCYPLMPGGLLLVEALLLRMTTPEALYEELQHNFPVILLLMFMVAGIHFMKELLLFLFSRILLGVRSKAVLSLLFCVLSAFLSAFLDALTVTAVIISAAVGFYAVYHRVASGTNPREESALDSDHQVEQLHREDLDQFRAFLRSLLMHGAVGTALGGVCTLVGEPQNLLIGHEMGWHFADFFLKVAPVSMPVLAAGLVTCVLLEKLRLFGYGTLMPERVRQVLAAYAAEDDAARTQAQRIALVVQGLAALILIVCLGLHIAEVGLIGLMVIVLITAFTGITDEHRLGRAFQDAMPFTALLVVFFAVVAVIHQQQLFSPLIAWVLALPSEQQPGMLYLANGLLSAISDNVFVATIYITEVKQAFVNGAMSREHFETLAVAINTGTNLPSVATPNGQAAFLFLLTSAIAPLIRLSYGRMVWMALPYTVVMGGLGWWAVTYWL</sequence>
<comment type="function">
    <text evidence="1">Na(+)/H(+) antiporter that extrudes sodium in exchange for external protons.</text>
</comment>
<comment type="catalytic activity">
    <reaction evidence="1">
        <text>2 Na(+)(in) + 3 H(+)(out) = 2 Na(+)(out) + 3 H(+)(in)</text>
        <dbReference type="Rhea" id="RHEA:29247"/>
        <dbReference type="ChEBI" id="CHEBI:15378"/>
        <dbReference type="ChEBI" id="CHEBI:29101"/>
    </reaction>
    <physiologicalReaction direction="left-to-right" evidence="1">
        <dbReference type="Rhea" id="RHEA:29248"/>
    </physiologicalReaction>
</comment>
<comment type="subcellular location">
    <subcellularLocation>
        <location evidence="1">Cell inner membrane</location>
        <topology evidence="1">Multi-pass membrane protein</topology>
    </subcellularLocation>
</comment>
<comment type="similarity">
    <text evidence="1">Belongs to the NhaB Na(+)/H(+) (TC 2.A.34) antiporter family.</text>
</comment>
<keyword id="KW-0050">Antiport</keyword>
<keyword id="KW-0997">Cell inner membrane</keyword>
<keyword id="KW-1003">Cell membrane</keyword>
<keyword id="KW-0406">Ion transport</keyword>
<keyword id="KW-0472">Membrane</keyword>
<keyword id="KW-0915">Sodium</keyword>
<keyword id="KW-0739">Sodium transport</keyword>
<keyword id="KW-0812">Transmembrane</keyword>
<keyword id="KW-1133">Transmembrane helix</keyword>
<keyword id="KW-0813">Transport</keyword>
<gene>
    <name evidence="1" type="primary">nhaB</name>
    <name type="ordered locus">PSEEN2182</name>
</gene>
<reference key="1">
    <citation type="journal article" date="2006" name="Nat. Biotechnol.">
        <title>Complete genome sequence of the entomopathogenic and metabolically versatile soil bacterium Pseudomonas entomophila.</title>
        <authorList>
            <person name="Vodovar N."/>
            <person name="Vallenet D."/>
            <person name="Cruveiller S."/>
            <person name="Rouy Z."/>
            <person name="Barbe V."/>
            <person name="Acosta C."/>
            <person name="Cattolico L."/>
            <person name="Jubin C."/>
            <person name="Lajus A."/>
            <person name="Segurens B."/>
            <person name="Vacherie B."/>
            <person name="Wincker P."/>
            <person name="Weissenbach J."/>
            <person name="Lemaitre B."/>
            <person name="Medigue C."/>
            <person name="Boccard F."/>
        </authorList>
    </citation>
    <scope>NUCLEOTIDE SEQUENCE [LARGE SCALE GENOMIC DNA]</scope>
    <source>
        <strain>L48</strain>
    </source>
</reference>
<protein>
    <recommendedName>
        <fullName evidence="1">Na(+)/H(+) antiporter NhaB</fullName>
    </recommendedName>
    <alternativeName>
        <fullName evidence="1">Sodium/proton antiporter NhaB</fullName>
    </alternativeName>
</protein>
<dbReference type="EMBL" id="CT573326">
    <property type="protein sequence ID" value="CAK15005.1"/>
    <property type="molecule type" value="Genomic_DNA"/>
</dbReference>
<dbReference type="RefSeq" id="WP_011533408.1">
    <property type="nucleotide sequence ID" value="NC_008027.1"/>
</dbReference>
<dbReference type="SMR" id="Q1IBG0"/>
<dbReference type="STRING" id="384676.PSEEN2182"/>
<dbReference type="GeneID" id="32805383"/>
<dbReference type="KEGG" id="pen:PSEEN2182"/>
<dbReference type="eggNOG" id="COG3067">
    <property type="taxonomic scope" value="Bacteria"/>
</dbReference>
<dbReference type="HOGENOM" id="CLU_041110_0_0_6"/>
<dbReference type="OrthoDB" id="5288732at2"/>
<dbReference type="Proteomes" id="UP000000658">
    <property type="component" value="Chromosome"/>
</dbReference>
<dbReference type="GO" id="GO:0005886">
    <property type="term" value="C:plasma membrane"/>
    <property type="evidence" value="ECO:0007669"/>
    <property type="project" value="UniProtKB-SubCell"/>
</dbReference>
<dbReference type="GO" id="GO:0015385">
    <property type="term" value="F:sodium:proton antiporter activity"/>
    <property type="evidence" value="ECO:0007669"/>
    <property type="project" value="InterPro"/>
</dbReference>
<dbReference type="HAMAP" id="MF_01599">
    <property type="entry name" value="NhaB"/>
    <property type="match status" value="1"/>
</dbReference>
<dbReference type="InterPro" id="IPR004671">
    <property type="entry name" value="Na+/H+_antiporter_NhaB"/>
</dbReference>
<dbReference type="NCBIfam" id="NF007093">
    <property type="entry name" value="PRK09547.1"/>
    <property type="match status" value="1"/>
</dbReference>
<dbReference type="PANTHER" id="PTHR43302:SF1">
    <property type="entry name" value="NA(+)_H(+) ANTIPORTER NHAB"/>
    <property type="match status" value="1"/>
</dbReference>
<dbReference type="PANTHER" id="PTHR43302">
    <property type="entry name" value="TRANSPORTER ARSB-RELATED"/>
    <property type="match status" value="1"/>
</dbReference>
<dbReference type="Pfam" id="PF06450">
    <property type="entry name" value="NhaB"/>
    <property type="match status" value="1"/>
</dbReference>